<comment type="function">
    <text evidence="4 5 6 9 12">Plays a key role in the repair of DNA damage, functioning as part of both the non-homologous end-joining (NHEJ) and base excision repair (BER) pathways (PubMed:10446192, PubMed:10446193, PubMed:15385968, PubMed:20852255, PubMed:28453785). Through its two catalytic activities, PNK ensures that DNA termini are compatible with extension and ligation by either removing 3'-phosphates from, or by phosphorylating 5'-hydroxyl groups on, the ribose sugar of the DNA backbone (PubMed:10446192, PubMed:10446193).</text>
</comment>
<comment type="catalytic activity">
    <reaction evidence="4 5">
        <text>a 3'end (2'-deoxyribonucleotide 3'-phosphate)-DNA + H2O = a 3'-end 2'-deoxyribonucleotide-DNA + phosphate</text>
        <dbReference type="Rhea" id="RHEA:14113"/>
        <dbReference type="Rhea" id="RHEA-COMP:13863"/>
        <dbReference type="Rhea" id="RHEA-COMP:13864"/>
        <dbReference type="ChEBI" id="CHEBI:15377"/>
        <dbReference type="ChEBI" id="CHEBI:43474"/>
        <dbReference type="ChEBI" id="CHEBI:138147"/>
        <dbReference type="ChEBI" id="CHEBI:138148"/>
        <dbReference type="EC" id="3.1.3.32"/>
    </reaction>
</comment>
<comment type="catalytic activity">
    <reaction evidence="4 5">
        <text>a 5'-end dephospho-2'-deoxyribonucleoside-DNA + ATP = a 5'-end 5'-phospho-2'-deoxyribonucleoside-DNA + ADP + H(+)</text>
        <dbReference type="Rhea" id="RHEA:15669"/>
        <dbReference type="Rhea" id="RHEA-COMP:13180"/>
        <dbReference type="Rhea" id="RHEA-COMP:13184"/>
        <dbReference type="ChEBI" id="CHEBI:15378"/>
        <dbReference type="ChEBI" id="CHEBI:30616"/>
        <dbReference type="ChEBI" id="CHEBI:136412"/>
        <dbReference type="ChEBI" id="CHEBI:136416"/>
        <dbReference type="ChEBI" id="CHEBI:456216"/>
        <dbReference type="EC" id="2.7.1.78"/>
    </reaction>
</comment>
<comment type="subunit">
    <text evidence="1 6 9 12">Monomer (By similarity). Interacts (via FHA domain) with XRCC4; mainly interacts with XRCC4 phosphorylated by CK2 but is also able to interact at much lower level with unphosphorylated PNKP (PubMed:15385968, PubMed:20852255, PubMed:28453785).</text>
</comment>
<comment type="interaction">
    <interactant intactId="EBI-1045072">
        <id>Q96T60</id>
    </interactant>
    <interactant intactId="EBI-8652492">
        <id>Q9UGQ2</id>
        <label>CACFD1</label>
    </interactant>
    <organismsDiffer>false</organismsDiffer>
    <experiments>3</experiments>
</comment>
<comment type="interaction">
    <interactant intactId="EBI-1045072">
        <id>Q96T60</id>
    </interactant>
    <interactant intactId="EBI-11523526">
        <id>Q13554-3</id>
        <label>CAMK2B</label>
    </interactant>
    <organismsDiffer>false</organismsDiffer>
    <experiments>3</experiments>
</comment>
<comment type="interaction">
    <interactant intactId="EBI-1045072">
        <id>Q96T60</id>
    </interactant>
    <interactant intactId="EBI-3866279">
        <id>Q9BWT7</id>
        <label>CARD10</label>
    </interactant>
    <organismsDiffer>false</organismsDiffer>
    <experiments>3</experiments>
</comment>
<comment type="interaction">
    <interactant intactId="EBI-1045072">
        <id>Q96T60</id>
    </interactant>
    <interactant intactId="EBI-12105646">
        <id>Q49A88-3</id>
        <label>CCDC14</label>
    </interactant>
    <organismsDiffer>false</organismsDiffer>
    <experiments>3</experiments>
</comment>
<comment type="interaction">
    <interactant intactId="EBI-1045072">
        <id>Q96T60</id>
    </interactant>
    <interactant intactId="EBI-10260148">
        <id>Q86WV7</id>
        <label>CCDC43</label>
    </interactant>
    <organismsDiffer>false</organismsDiffer>
    <experiments>3</experiments>
</comment>
<comment type="interaction">
    <interactant intactId="EBI-1045072">
        <id>Q96T60</id>
    </interactant>
    <interactant intactId="EBI-25837549">
        <id>P28329-3</id>
        <label>CHAT</label>
    </interactant>
    <organismsDiffer>false</organismsDiffer>
    <experiments>3</experiments>
</comment>
<comment type="interaction">
    <interactant intactId="EBI-1045072">
        <id>Q96T60</id>
    </interactant>
    <interactant intactId="EBI-1045797">
        <id>Q8N5K1</id>
        <label>CISD2</label>
    </interactant>
    <organismsDiffer>false</organismsDiffer>
    <experiments>3</experiments>
</comment>
<comment type="interaction">
    <interactant intactId="EBI-1045072">
        <id>Q96T60</id>
    </interactant>
    <interactant intactId="EBI-947360">
        <id>Q8N137</id>
        <label>CNTROB</label>
    </interactant>
    <organismsDiffer>false</organismsDiffer>
    <experiments>3</experiments>
</comment>
<comment type="interaction">
    <interactant intactId="EBI-1045072">
        <id>Q96T60</id>
    </interactant>
    <interactant intactId="EBI-2528742">
        <id>Q9UMD9</id>
        <label>COL17A1</label>
    </interactant>
    <organismsDiffer>false</organismsDiffer>
    <experiments>3</experiments>
</comment>
<comment type="interaction">
    <interactant intactId="EBI-1045072">
        <id>Q96T60</id>
    </interactant>
    <interactant intactId="EBI-739789">
        <id>Q92997</id>
        <label>DVL3</label>
    </interactant>
    <organismsDiffer>false</organismsDiffer>
    <experiments>3</experiments>
</comment>
<comment type="interaction">
    <interactant intactId="EBI-1045072">
        <id>Q96T60</id>
    </interactant>
    <interactant intactId="EBI-3943864">
        <id>Q8N9I5</id>
        <label>FADS6</label>
    </interactant>
    <organismsDiffer>false</organismsDiffer>
    <experiments>3</experiments>
</comment>
<comment type="interaction">
    <interactant intactId="EBI-1045072">
        <id>Q96T60</id>
    </interactant>
    <interactant intactId="EBI-348399">
        <id>P22607</id>
        <label>FGFR3</label>
    </interactant>
    <organismsDiffer>false</organismsDiffer>
    <experiments>3</experiments>
</comment>
<comment type="interaction">
    <interactant intactId="EBI-1045072">
        <id>Q96T60</id>
    </interactant>
    <interactant intactId="EBI-1644164">
        <id>O43524</id>
        <label>FOXO3</label>
    </interactant>
    <organismsDiffer>false</organismsDiffer>
    <experiments>2</experiments>
</comment>
<comment type="interaction">
    <interactant intactId="EBI-1045072">
        <id>Q96T60</id>
    </interactant>
    <interactant intactId="EBI-1052570">
        <id>O95995</id>
        <label>GAS8</label>
    </interactant>
    <organismsDiffer>false</organismsDiffer>
    <experiments>3</experiments>
</comment>
<comment type="interaction">
    <interactant intactId="EBI-1045072">
        <id>Q96T60</id>
    </interactant>
    <interactant intactId="EBI-745305">
        <id>Q13422</id>
        <label>IKZF1</label>
    </interactant>
    <organismsDiffer>false</organismsDiffer>
    <experiments>3</experiments>
</comment>
<comment type="interaction">
    <interactant intactId="EBI-1045072">
        <id>Q96T60</id>
    </interactant>
    <interactant intactId="EBI-11522367">
        <id>Q13422-7</id>
        <label>IKZF1</label>
    </interactant>
    <organismsDiffer>false</organismsDiffer>
    <experiments>3</experiments>
</comment>
<comment type="interaction">
    <interactant intactId="EBI-1045072">
        <id>Q96T60</id>
    </interactant>
    <interactant intactId="EBI-2556193">
        <id>Q63ZY3</id>
        <label>KANK2</label>
    </interactant>
    <organismsDiffer>false</organismsDiffer>
    <experiments>3</experiments>
</comment>
<comment type="interaction">
    <interactant intactId="EBI-1045072">
        <id>Q96T60</id>
    </interactant>
    <interactant intactId="EBI-740929">
        <id>Q53G59</id>
        <label>KLHL12</label>
    </interactant>
    <organismsDiffer>false</organismsDiffer>
    <experiments>3</experiments>
</comment>
<comment type="interaction">
    <interactant intactId="EBI-1045072">
        <id>Q96T60</id>
    </interactant>
    <interactant intactId="EBI-307531">
        <id>P23508</id>
        <label>MCC</label>
    </interactant>
    <organismsDiffer>false</organismsDiffer>
    <experiments>3</experiments>
</comment>
<comment type="interaction">
    <interactant intactId="EBI-1045072">
        <id>Q96T60</id>
    </interactant>
    <interactant intactId="EBI-16439278">
        <id>Q6FHY5</id>
        <label>MEOX2</label>
    </interactant>
    <organismsDiffer>false</organismsDiffer>
    <experiments>3</experiments>
</comment>
<comment type="interaction">
    <interactant intactId="EBI-1045072">
        <id>Q96T60</id>
    </interactant>
    <interactant intactId="EBI-11324706">
        <id>Q99735</id>
        <label>MGST2</label>
    </interactant>
    <organismsDiffer>false</organismsDiffer>
    <experiments>3</experiments>
</comment>
<comment type="interaction">
    <interactant intactId="EBI-1045072">
        <id>Q96T60</id>
    </interactant>
    <interactant intactId="EBI-7850168">
        <id>Q8NCY6</id>
        <label>MSANTD4</label>
    </interactant>
    <organismsDiffer>false</organismsDiffer>
    <experiments>3</experiments>
</comment>
<comment type="interaction">
    <interactant intactId="EBI-1045072">
        <id>Q96T60</id>
    </interactant>
    <interactant intactId="EBI-79165">
        <id>Q9NRD5</id>
        <label>PICK1</label>
    </interactant>
    <organismsDiffer>false</organismsDiffer>
    <experiments>3</experiments>
</comment>
<comment type="interaction">
    <interactant intactId="EBI-1045072">
        <id>Q96T60</id>
    </interactant>
    <interactant intactId="EBI-10171633">
        <id>Q96PV4</id>
        <label>PNMA5</label>
    </interactant>
    <organismsDiffer>false</organismsDiffer>
    <experiments>3</experiments>
</comment>
<comment type="interaction">
    <interactant intactId="EBI-1045072">
        <id>Q96T60</id>
    </interactant>
    <interactant intactId="EBI-1050964">
        <id>O43586</id>
        <label>PSTPIP1</label>
    </interactant>
    <organismsDiffer>false</organismsDiffer>
    <experiments>3</experiments>
</comment>
<comment type="interaction">
    <interactant intactId="EBI-1045072">
        <id>Q96T60</id>
    </interactant>
    <interactant intactId="EBI-1052363">
        <id>Q9NS64</id>
        <label>RPRM</label>
    </interactant>
    <organismsDiffer>false</organismsDiffer>
    <experiments>3</experiments>
</comment>
<comment type="interaction">
    <interactant intactId="EBI-1045072">
        <id>Q96T60</id>
    </interactant>
    <interactant intactId="EBI-2854842">
        <id>Q8WV19</id>
        <label>SFT2D1</label>
    </interactant>
    <organismsDiffer>false</organismsDiffer>
    <experiments>3</experiments>
</comment>
<comment type="interaction">
    <interactant intactId="EBI-1045072">
        <id>Q96T60</id>
    </interactant>
    <interactant intactId="EBI-1046690">
        <id>O60749</id>
        <label>SNX2</label>
    </interactant>
    <organismsDiffer>false</organismsDiffer>
    <experiments>3</experiments>
</comment>
<comment type="interaction">
    <interactant intactId="EBI-1045072">
        <id>Q96T60</id>
    </interactant>
    <interactant intactId="EBI-10198587">
        <id>Q02446</id>
        <label>SP4</label>
    </interactant>
    <organismsDiffer>false</organismsDiffer>
    <experiments>3</experiments>
</comment>
<comment type="interaction">
    <interactant intactId="EBI-1045072">
        <id>Q96T60</id>
    </interactant>
    <interactant intactId="EBI-12187159">
        <id>O43759-2</id>
        <label>SYNGR1</label>
    </interactant>
    <organismsDiffer>false</organismsDiffer>
    <experiments>3</experiments>
</comment>
<comment type="interaction">
    <interactant intactId="EBI-1045072">
        <id>Q96T60</id>
    </interactant>
    <interactant intactId="EBI-11321949">
        <id>O43761</id>
        <label>SYNGR3</label>
    </interactant>
    <organismsDiffer>false</organismsDiffer>
    <experiments>3</experiments>
</comment>
<comment type="interaction">
    <interactant intactId="EBI-1045072">
        <id>Q96T60</id>
    </interactant>
    <interactant intactId="EBI-9071725">
        <id>P08247</id>
        <label>SYP</label>
    </interactant>
    <organismsDiffer>false</organismsDiffer>
    <experiments>3</experiments>
</comment>
<comment type="interaction">
    <interactant intactId="EBI-1045072">
        <id>Q96T60</id>
    </interactant>
    <interactant intactId="EBI-978581">
        <id>Q15633</id>
        <label>TARBP2</label>
    </interactant>
    <organismsDiffer>false</organismsDiffer>
    <experiments>3</experiments>
</comment>
<comment type="interaction">
    <interactant intactId="EBI-1045072">
        <id>Q96T60</id>
    </interactant>
    <interactant intactId="EBI-1644036">
        <id>Q86TI0</id>
        <label>TBC1D1</label>
    </interactant>
    <organismsDiffer>false</organismsDiffer>
    <experiments>3</experiments>
</comment>
<comment type="interaction">
    <interactant intactId="EBI-1045072">
        <id>Q96T60</id>
    </interactant>
    <interactant intactId="EBI-741515">
        <id>Q9NVV9</id>
        <label>THAP1</label>
    </interactant>
    <organismsDiffer>false</organismsDiffer>
    <experiments>3</experiments>
</comment>
<comment type="interaction">
    <interactant intactId="EBI-1045072">
        <id>Q96T60</id>
    </interactant>
    <interactant intactId="EBI-11528917">
        <id>Q8WW34-2</id>
        <label>TMEM239</label>
    </interactant>
    <organismsDiffer>false</organismsDiffer>
    <experiments>3</experiments>
</comment>
<comment type="interaction">
    <interactant intactId="EBI-1045072">
        <id>Q96T60</id>
    </interactant>
    <interactant intactId="EBI-357849">
        <id>Q15025</id>
        <label>TNIP1</label>
    </interactant>
    <organismsDiffer>false</organismsDiffer>
    <experiments>6</experiments>
</comment>
<comment type="interaction">
    <interactant intactId="EBI-1045072">
        <id>Q96T60</id>
    </interactant>
    <interactant intactId="EBI-741602">
        <id>O94972</id>
        <label>TRIM37</label>
    </interactant>
    <organismsDiffer>false</organismsDiffer>
    <experiments>6</experiments>
</comment>
<comment type="interaction">
    <interactant intactId="EBI-1045072">
        <id>Q96T60</id>
    </interactant>
    <interactant intactId="EBI-741480">
        <id>Q9UMX0</id>
        <label>UBQLN1</label>
    </interactant>
    <organismsDiffer>false</organismsDiffer>
    <experiments>3</experiments>
</comment>
<comment type="interaction">
    <interactant intactId="EBI-1045072">
        <id>Q96T60</id>
    </interactant>
    <interactant intactId="EBI-947466">
        <id>P18887</id>
        <label>XRCC1</label>
    </interactant>
    <organismsDiffer>false</organismsDiffer>
    <experiments>6</experiments>
</comment>
<comment type="interaction">
    <interactant intactId="EBI-1045072">
        <id>Q96T60</id>
    </interactant>
    <interactant intactId="EBI-717592">
        <id>Q13426</id>
        <label>XRCC4</label>
    </interactant>
    <organismsDiffer>false</organismsDiffer>
    <experiments>12</experiments>
</comment>
<comment type="interaction">
    <interactant intactId="EBI-1045072">
        <id>Q96T60</id>
    </interactant>
    <interactant intactId="EBI-10176632">
        <id>O43829</id>
        <label>ZBTB14</label>
    </interactant>
    <organismsDiffer>false</organismsDiffer>
    <experiments>6</experiments>
</comment>
<comment type="interaction">
    <interactant intactId="EBI-1045072">
        <id>Q96T60</id>
    </interactant>
    <interactant intactId="EBI-947476">
        <id>Q9UID6</id>
        <label>ZNF639</label>
    </interactant>
    <organismsDiffer>false</organismsDiffer>
    <experiments>6</experiments>
</comment>
<comment type="subcellular location">
    <subcellularLocation>
        <location evidence="5">Nucleus</location>
    </subcellularLocation>
    <subcellularLocation>
        <location evidence="12">Chromosome</location>
    </subcellularLocation>
    <text evidence="12">Localizes to site of double-strand breaks.</text>
</comment>
<comment type="alternative products">
    <event type="alternative splicing"/>
    <isoform>
        <id>Q96T60-1</id>
        <name>1</name>
        <sequence type="displayed"/>
    </isoform>
    <isoform>
        <id>Q96T60-2</id>
        <name>2</name>
        <sequence type="described" ref="VSP_055500"/>
    </isoform>
</comment>
<comment type="tissue specificity">
    <text evidence="4 5">Expressed in many tissues with highest expression in spleen and testis, and lowest expression in small intestine (PubMed:10446192). Expressed in higher amount in pancreas, heart and kidney and at lower levels in brain, lung and liver (PubMed:10446193).</text>
</comment>
<comment type="domain">
    <text evidence="6 7 9">The FHA domain binds threonine-phosphorylated peptides from XRCC1/4, and is responsible for the recruitment of PNKP to the sites of DNA repair. The affinity is ten times greater if peptides are also phosphorylated on the serine preceeding the phosphothreonine.</text>
</comment>
<comment type="disease" evidence="8 11 12">
    <disease id="DI-02855">
        <name>Microcephaly, seizures, and developmental delay</name>
        <acronym>MCSZ</acronym>
        <description>An autosomal recessive neurodevelopmental disorder characterized by infantile-onset seizures, microcephaly, severe intellectual disability and delayed motor milestones with absent speech or only achieving a few words. Most patients also have behavioral problems with hyperactivity. Microcephaly is progressive and without neuronal migration or structural abnormalities, consistent with primary microcephaly.</description>
        <dbReference type="MIM" id="613402"/>
    </disease>
    <text>The disease is caused by variants affecting the gene represented in this entry.</text>
</comment>
<comment type="disease" evidence="10">
    <disease id="DI-04356">
        <name>Ataxia-oculomotor apraxia 4</name>
        <acronym>AOA4</acronym>
        <description>An autosomal recessive disease characterized by cerebellar ataxia, oculomotor apraxia, areflexia and peripheral neuropathy.</description>
        <dbReference type="MIM" id="616267"/>
    </disease>
    <text>The disease is caused by variants affecting the gene represented in this entry.</text>
</comment>
<comment type="similarity">
    <text evidence="16">In the N-terminal section; belongs to the DNA 3' phosphatase family.</text>
</comment>
<comment type="sequence caution" evidence="16">
    <conflict type="frameshift">
        <sequence resource="EMBL-CDS" id="AAD47379"/>
    </conflict>
</comment>
<name>PNKP_HUMAN</name>
<gene>
    <name evidence="14 17" type="primary">PNKP</name>
</gene>
<sequence length="521" mass="57076">MGEVEAPGRLWLESPPGGAPPIFLPSDGQALVLGRGPLTQVTDRKCSRTQVELVADPETRTVAVKQLGVNPSTTGTQELKPGLEGSLGVGDTLYLVNGLHPLTLRWEETRTPESQPDTPPGTPLVSQDEKRDAELPKKRMRKSNPGWENLEKLLVFTAAGVKPQGKVAGFDLDGTLITTRSGKVFPTGPSDWRILYPEIPRKLRELEAEGYKLVIFTNQMSIGRGKLPAEEFKAKVEAVVEKLGVPFQVLVATHAGLYRKPVTGMWDHLQEQANDGTPISIGDSIFVGDAAGRPANWAPGRKKKDFSCADRLFALNLGLPFATPEEFFLKWPAAGFELPAFDPRTVSRSGPLCLPESRALLSASPEVVVAVGFPGAGKSTFLKKHLVSAGYVHVNRDTLGSWQRCVTTCETALKQGKRVAIDNTNPDAASRARYVQCARAAGVPCRCFLFTATLEQARHNNRFREMTDSSHIPVSDMVMYGYRKQFEAPTLAEGFSAILEIPFRLWVEPRLGRLYCQFSEG</sequence>
<dbReference type="EC" id="3.1.3.32" evidence="4 5"/>
<dbReference type="EC" id="2.7.1.78"/>
<dbReference type="EMBL" id="AF126486">
    <property type="protein sequence ID" value="AAD51135.1"/>
    <property type="molecule type" value="mRNA"/>
</dbReference>
<dbReference type="EMBL" id="AF125807">
    <property type="protein sequence ID" value="AAD50639.1"/>
    <property type="molecule type" value="mRNA"/>
</dbReference>
<dbReference type="EMBL" id="AF120499">
    <property type="protein sequence ID" value="AAD47379.1"/>
    <property type="status" value="ALT_FRAME"/>
    <property type="molecule type" value="mRNA"/>
</dbReference>
<dbReference type="EMBL" id="AF354258">
    <property type="protein sequence ID" value="AAK57340.1"/>
    <property type="molecule type" value="Genomic_DNA"/>
</dbReference>
<dbReference type="EMBL" id="AY133033">
    <property type="protein sequence ID" value="AAM82170.1"/>
    <property type="molecule type" value="Genomic_DNA"/>
</dbReference>
<dbReference type="EMBL" id="AC018766">
    <property type="protein sequence ID" value="AAF44716.1"/>
    <property type="molecule type" value="Genomic_DNA"/>
</dbReference>
<dbReference type="EMBL" id="BC002519">
    <property type="protein sequence ID" value="AAH02519.2"/>
    <property type="molecule type" value="mRNA"/>
</dbReference>
<dbReference type="EMBL" id="BC033822">
    <property type="protein sequence ID" value="AAH33822.1"/>
    <property type="molecule type" value="mRNA"/>
</dbReference>
<dbReference type="CCDS" id="CCDS12783.1">
    <molecule id="Q96T60-1"/>
</dbReference>
<dbReference type="RefSeq" id="NP_009185.2">
    <molecule id="Q96T60-1"/>
    <property type="nucleotide sequence ID" value="NM_007254.3"/>
</dbReference>
<dbReference type="PDB" id="2BRF">
    <property type="method" value="X-ray"/>
    <property type="resolution" value="1.40 A"/>
    <property type="chains" value="A=1-110"/>
</dbReference>
<dbReference type="PDB" id="2W3O">
    <property type="method" value="X-ray"/>
    <property type="resolution" value="1.85 A"/>
    <property type="chains" value="A/B=1-110"/>
</dbReference>
<dbReference type="PDBsum" id="2BRF"/>
<dbReference type="PDBsum" id="2W3O"/>
<dbReference type="SMR" id="Q96T60"/>
<dbReference type="BioGRID" id="116440">
    <property type="interactions" value="140"/>
</dbReference>
<dbReference type="ComplexPortal" id="CPX-793">
    <property type="entry name" value="XRCC1 DNA repair complex"/>
</dbReference>
<dbReference type="CORUM" id="Q96T60"/>
<dbReference type="FunCoup" id="Q96T60">
    <property type="interactions" value="1602"/>
</dbReference>
<dbReference type="IntAct" id="Q96T60">
    <property type="interactions" value="66"/>
</dbReference>
<dbReference type="MINT" id="Q96T60"/>
<dbReference type="STRING" id="9606.ENSP00000323511"/>
<dbReference type="BindingDB" id="Q96T60"/>
<dbReference type="ChEMBL" id="CHEMBL4523434"/>
<dbReference type="DEPOD" id="PNKP"/>
<dbReference type="GlyGen" id="Q96T60">
    <property type="glycosylation" value="1 site, 1 O-linked glycan (1 site)"/>
</dbReference>
<dbReference type="iPTMnet" id="Q96T60"/>
<dbReference type="PhosphoSitePlus" id="Q96T60"/>
<dbReference type="SwissPalm" id="Q96T60"/>
<dbReference type="BioMuta" id="PNKP"/>
<dbReference type="DMDM" id="50401132"/>
<dbReference type="jPOST" id="Q96T60"/>
<dbReference type="MassIVE" id="Q96T60"/>
<dbReference type="PaxDb" id="9606-ENSP00000323511"/>
<dbReference type="PeptideAtlas" id="Q96T60"/>
<dbReference type="ProteomicsDB" id="78199">
    <molecule id="Q96T60-1"/>
</dbReference>
<dbReference type="Pumba" id="Q96T60"/>
<dbReference type="Antibodypedia" id="1861">
    <property type="antibodies" value="308 antibodies from 35 providers"/>
</dbReference>
<dbReference type="DNASU" id="11284"/>
<dbReference type="Ensembl" id="ENST00000322344.8">
    <molecule id="Q96T60-1"/>
    <property type="protein sequence ID" value="ENSP00000323511.2"/>
    <property type="gene ID" value="ENSG00000039650.12"/>
</dbReference>
<dbReference type="Ensembl" id="ENST00000596014.5">
    <molecule id="Q96T60-1"/>
    <property type="protein sequence ID" value="ENSP00000472300.1"/>
    <property type="gene ID" value="ENSG00000039650.12"/>
</dbReference>
<dbReference type="GeneID" id="11284"/>
<dbReference type="KEGG" id="hsa:11284"/>
<dbReference type="MANE-Select" id="ENST00000322344.8">
    <property type="protein sequence ID" value="ENSP00000323511.2"/>
    <property type="RefSeq nucleotide sequence ID" value="NM_007254.4"/>
    <property type="RefSeq protein sequence ID" value="NP_009185.2"/>
</dbReference>
<dbReference type="UCSC" id="uc002pqj.4">
    <molecule id="Q96T60-1"/>
    <property type="organism name" value="human"/>
</dbReference>
<dbReference type="AGR" id="HGNC:9154"/>
<dbReference type="CTD" id="11284"/>
<dbReference type="DisGeNET" id="11284"/>
<dbReference type="GeneCards" id="PNKP"/>
<dbReference type="HGNC" id="HGNC:9154">
    <property type="gene designation" value="PNKP"/>
</dbReference>
<dbReference type="HPA" id="ENSG00000039650">
    <property type="expression patterns" value="Low tissue specificity"/>
</dbReference>
<dbReference type="MalaCards" id="PNKP"/>
<dbReference type="MIM" id="605610">
    <property type="type" value="gene"/>
</dbReference>
<dbReference type="MIM" id="613402">
    <property type="type" value="phenotype"/>
</dbReference>
<dbReference type="MIM" id="616267">
    <property type="type" value="phenotype"/>
</dbReference>
<dbReference type="neXtProt" id="NX_Q96T60"/>
<dbReference type="OpenTargets" id="ENSG00000039650"/>
<dbReference type="Orphanet" id="459033">
    <property type="disease" value="Ataxia-oculomotor apraxia type 4"/>
</dbReference>
<dbReference type="Orphanet" id="101101">
    <property type="disease" value="Charcot-Marie-Tooth disease type 2B2"/>
</dbReference>
<dbReference type="Orphanet" id="1934">
    <property type="disease" value="Early infantile developmental and epileptic encephalopathy"/>
</dbReference>
<dbReference type="PharmGKB" id="PA33477"/>
<dbReference type="VEuPathDB" id="HostDB:ENSG00000039650"/>
<dbReference type="eggNOG" id="KOG2134">
    <property type="taxonomic scope" value="Eukaryota"/>
</dbReference>
<dbReference type="GeneTree" id="ENSGT00940000159302"/>
<dbReference type="HOGENOM" id="CLU_014938_1_1_1"/>
<dbReference type="InParanoid" id="Q96T60"/>
<dbReference type="OMA" id="AADWKWW"/>
<dbReference type="OrthoDB" id="19045at2759"/>
<dbReference type="PAN-GO" id="Q96T60">
    <property type="GO annotations" value="6 GO annotations based on evolutionary models"/>
</dbReference>
<dbReference type="PhylomeDB" id="Q96T60"/>
<dbReference type="TreeFam" id="TF313738"/>
<dbReference type="BRENDA" id="2.7.1.78">
    <property type="organism ID" value="2681"/>
</dbReference>
<dbReference type="BRENDA" id="3.1.3.32">
    <property type="organism ID" value="2681"/>
</dbReference>
<dbReference type="PathwayCommons" id="Q96T60"/>
<dbReference type="Reactome" id="R-HSA-5649702">
    <property type="pathway name" value="APEX1-Independent Resolution of AP Sites via the Single Nucleotide Replacement Pathway"/>
</dbReference>
<dbReference type="SignaLink" id="Q96T60"/>
<dbReference type="SIGNOR" id="Q96T60"/>
<dbReference type="BioGRID-ORCS" id="11284">
    <property type="hits" value="494 hits in 1175 CRISPR screens"/>
</dbReference>
<dbReference type="CD-CODE" id="91857CE7">
    <property type="entry name" value="Nucleolus"/>
</dbReference>
<dbReference type="EvolutionaryTrace" id="Q96T60"/>
<dbReference type="GeneWiki" id="PNKP"/>
<dbReference type="GenomeRNAi" id="11284"/>
<dbReference type="Pharos" id="Q96T60">
    <property type="development level" value="Tchem"/>
</dbReference>
<dbReference type="PRO" id="PR:Q96T60"/>
<dbReference type="Proteomes" id="UP000005640">
    <property type="component" value="Chromosome 19"/>
</dbReference>
<dbReference type="RNAct" id="Q96T60">
    <property type="molecule type" value="protein"/>
</dbReference>
<dbReference type="Bgee" id="ENSG00000039650">
    <property type="expression patterns" value="Expressed in right uterine tube and 184 other cell types or tissues"/>
</dbReference>
<dbReference type="ExpressionAtlas" id="Q96T60">
    <property type="expression patterns" value="baseline and differential"/>
</dbReference>
<dbReference type="GO" id="GO:0016020">
    <property type="term" value="C:membrane"/>
    <property type="evidence" value="ECO:0007005"/>
    <property type="project" value="UniProtKB"/>
</dbReference>
<dbReference type="GO" id="GO:0005730">
    <property type="term" value="C:nucleolus"/>
    <property type="evidence" value="ECO:0000314"/>
    <property type="project" value="HPA"/>
</dbReference>
<dbReference type="GO" id="GO:0005654">
    <property type="term" value="C:nucleoplasm"/>
    <property type="evidence" value="ECO:0000314"/>
    <property type="project" value="HPA"/>
</dbReference>
<dbReference type="GO" id="GO:0005634">
    <property type="term" value="C:nucleus"/>
    <property type="evidence" value="ECO:0000314"/>
    <property type="project" value="UniProtKB"/>
</dbReference>
<dbReference type="GO" id="GO:0035861">
    <property type="term" value="C:site of double-strand break"/>
    <property type="evidence" value="ECO:0000314"/>
    <property type="project" value="UniProtKB"/>
</dbReference>
<dbReference type="GO" id="GO:0005524">
    <property type="term" value="F:ATP binding"/>
    <property type="evidence" value="ECO:0000303"/>
    <property type="project" value="UniProtKB"/>
</dbReference>
<dbReference type="GO" id="GO:0046404">
    <property type="term" value="F:ATP-dependent polydeoxyribonucleotide 5'-hydroxyl-kinase activity"/>
    <property type="evidence" value="ECO:0000314"/>
    <property type="project" value="UniProtKB"/>
</dbReference>
<dbReference type="GO" id="GO:0003684">
    <property type="term" value="F:damaged DNA binding"/>
    <property type="evidence" value="ECO:0000303"/>
    <property type="project" value="UniProtKB"/>
</dbReference>
<dbReference type="GO" id="GO:0003690">
    <property type="term" value="F:double-stranded DNA binding"/>
    <property type="evidence" value="ECO:0000304"/>
    <property type="project" value="UniProtKB"/>
</dbReference>
<dbReference type="GO" id="GO:0004519">
    <property type="term" value="F:endonuclease activity"/>
    <property type="evidence" value="ECO:0000303"/>
    <property type="project" value="UniProtKB"/>
</dbReference>
<dbReference type="GO" id="GO:0046403">
    <property type="term" value="F:polynucleotide 3'-phosphatase activity"/>
    <property type="evidence" value="ECO:0000314"/>
    <property type="project" value="UniProtKB"/>
</dbReference>
<dbReference type="GO" id="GO:0017076">
    <property type="term" value="F:purine nucleotide binding"/>
    <property type="evidence" value="ECO:0000303"/>
    <property type="project" value="UniProtKB"/>
</dbReference>
<dbReference type="GO" id="GO:0006287">
    <property type="term" value="P:base-excision repair, gap-filling"/>
    <property type="evidence" value="ECO:0000304"/>
    <property type="project" value="Reactome"/>
</dbReference>
<dbReference type="GO" id="GO:0006281">
    <property type="term" value="P:DNA repair"/>
    <property type="evidence" value="ECO:0000316"/>
    <property type="project" value="UniProtKB"/>
</dbReference>
<dbReference type="GO" id="GO:0006261">
    <property type="term" value="P:DNA-templated DNA replication"/>
    <property type="evidence" value="ECO:0000303"/>
    <property type="project" value="UniProtKB"/>
</dbReference>
<dbReference type="GO" id="GO:0006303">
    <property type="term" value="P:double-strand break repair via nonhomologous end joining"/>
    <property type="evidence" value="ECO:0000314"/>
    <property type="project" value="UniProtKB"/>
</dbReference>
<dbReference type="GO" id="GO:0006289">
    <property type="term" value="P:nucleotide-excision repair"/>
    <property type="evidence" value="ECO:0000304"/>
    <property type="project" value="UniProtKB"/>
</dbReference>
<dbReference type="GO" id="GO:2001034">
    <property type="term" value="P:positive regulation of double-strand break repair via nonhomologous end joining"/>
    <property type="evidence" value="ECO:0000315"/>
    <property type="project" value="CACAO"/>
</dbReference>
<dbReference type="GO" id="GO:0032206">
    <property type="term" value="P:positive regulation of telomere maintenance"/>
    <property type="evidence" value="ECO:0000315"/>
    <property type="project" value="BHF-UCL"/>
</dbReference>
<dbReference type="GO" id="GO:0006979">
    <property type="term" value="P:response to oxidative stress"/>
    <property type="evidence" value="ECO:0000314"/>
    <property type="project" value="UniProtKB"/>
</dbReference>
<dbReference type="GO" id="GO:0009314">
    <property type="term" value="P:response to radiation"/>
    <property type="evidence" value="ECO:0000304"/>
    <property type="project" value="UniProtKB"/>
</dbReference>
<dbReference type="CDD" id="cd22736">
    <property type="entry name" value="FHA_PNKP"/>
    <property type="match status" value="1"/>
</dbReference>
<dbReference type="CDD" id="cd01625">
    <property type="entry name" value="HAD_PNP"/>
    <property type="match status" value="1"/>
</dbReference>
<dbReference type="FunFam" id="3.40.50.1000:FF:000078">
    <property type="entry name" value="Bifunctional polynucleotide phosphatase/kinase"/>
    <property type="match status" value="1"/>
</dbReference>
<dbReference type="FunFam" id="3.40.50.300:FF:000737">
    <property type="entry name" value="Bifunctional polynucleotide phosphatase/kinase"/>
    <property type="match status" value="1"/>
</dbReference>
<dbReference type="FunFam" id="2.60.200.20:FF:000009">
    <property type="entry name" value="bifunctional polynucleotide phosphatase/kinase"/>
    <property type="match status" value="1"/>
</dbReference>
<dbReference type="Gene3D" id="2.60.200.20">
    <property type="match status" value="1"/>
</dbReference>
<dbReference type="Gene3D" id="3.40.50.1000">
    <property type="entry name" value="HAD superfamily/HAD-like"/>
    <property type="match status" value="1"/>
</dbReference>
<dbReference type="Gene3D" id="3.40.50.300">
    <property type="entry name" value="P-loop containing nucleotide triphosphate hydrolases"/>
    <property type="match status" value="1"/>
</dbReference>
<dbReference type="InterPro" id="IPR041388">
    <property type="entry name" value="FHA_2"/>
</dbReference>
<dbReference type="InterPro" id="IPR036412">
    <property type="entry name" value="HAD-like_sf"/>
</dbReference>
<dbReference type="InterPro" id="IPR006549">
    <property type="entry name" value="HAD-SF_hydro_IIIA"/>
</dbReference>
<dbReference type="InterPro" id="IPR023214">
    <property type="entry name" value="HAD_sf"/>
</dbReference>
<dbReference type="InterPro" id="IPR027417">
    <property type="entry name" value="P-loop_NTPase"/>
</dbReference>
<dbReference type="InterPro" id="IPR013954">
    <property type="entry name" value="PNK3P"/>
</dbReference>
<dbReference type="InterPro" id="IPR006550">
    <property type="entry name" value="PNKP"/>
</dbReference>
<dbReference type="InterPro" id="IPR006551">
    <property type="entry name" value="Polynucleotide_phosphatase"/>
</dbReference>
<dbReference type="InterPro" id="IPR008984">
    <property type="entry name" value="SMAD_FHA_dom_sf"/>
</dbReference>
<dbReference type="NCBIfam" id="TIGR01664">
    <property type="entry name" value="DNA-3'-Pase"/>
    <property type="match status" value="1"/>
</dbReference>
<dbReference type="NCBIfam" id="TIGR01662">
    <property type="entry name" value="HAD-SF-IIIA"/>
    <property type="match status" value="1"/>
</dbReference>
<dbReference type="NCBIfam" id="TIGR01663">
    <property type="entry name" value="PNK-3'Pase"/>
    <property type="match status" value="1"/>
</dbReference>
<dbReference type="PANTHER" id="PTHR12083">
    <property type="entry name" value="BIFUNCTIONAL POLYNUCLEOTIDE PHOSPHATASE/KINASE"/>
    <property type="match status" value="1"/>
</dbReference>
<dbReference type="PANTHER" id="PTHR12083:SF9">
    <property type="entry name" value="BIFUNCTIONAL POLYNUCLEOTIDE PHOSPHATASE_KINASE"/>
    <property type="match status" value="1"/>
</dbReference>
<dbReference type="Pfam" id="PF13671">
    <property type="entry name" value="AAA_33"/>
    <property type="match status" value="1"/>
</dbReference>
<dbReference type="Pfam" id="PF17913">
    <property type="entry name" value="FHA_2"/>
    <property type="match status" value="1"/>
</dbReference>
<dbReference type="Pfam" id="PF08645">
    <property type="entry name" value="PNK3P"/>
    <property type="match status" value="1"/>
</dbReference>
<dbReference type="SUPFAM" id="SSF56784">
    <property type="entry name" value="HAD-like"/>
    <property type="match status" value="1"/>
</dbReference>
<dbReference type="SUPFAM" id="SSF52540">
    <property type="entry name" value="P-loop containing nucleoside triphosphate hydrolases"/>
    <property type="match status" value="1"/>
</dbReference>
<dbReference type="SUPFAM" id="SSF49879">
    <property type="entry name" value="SMAD/FHA domain"/>
    <property type="match status" value="1"/>
</dbReference>
<feature type="chain" id="PRO_0000058478" description="Bifunctional polynucleotide phosphatase/kinase">
    <location>
        <begin position="1"/>
        <end position="521"/>
    </location>
</feature>
<feature type="domain" description="FHA">
    <location>
        <begin position="6"/>
        <end position="110"/>
    </location>
</feature>
<feature type="region of interest" description="Disordered" evidence="3">
    <location>
        <begin position="109"/>
        <end position="143"/>
    </location>
</feature>
<feature type="region of interest" description="Phosphatase" evidence="1">
    <location>
        <begin position="146"/>
        <end position="337"/>
    </location>
</feature>
<feature type="region of interest" description="Kinase" evidence="1">
    <location>
        <begin position="341"/>
        <end position="516"/>
    </location>
</feature>
<feature type="compositionally biased region" description="Basic and acidic residues" evidence="3">
    <location>
        <begin position="127"/>
        <end position="137"/>
    </location>
</feature>
<feature type="binding site" evidence="2">
    <location>
        <begin position="372"/>
        <end position="379"/>
    </location>
    <ligand>
        <name>ATP</name>
        <dbReference type="ChEBI" id="CHEBI:30616"/>
    </ligand>
</feature>
<feature type="modified residue" description="N-acetylmethionine" evidence="23">
    <location>
        <position position="1"/>
    </location>
</feature>
<feature type="modified residue" description="Phosphoserine" evidence="22 24">
    <location>
        <position position="114"/>
    </location>
</feature>
<feature type="modified residue" description="Phosphothreonine" evidence="19 20 21 22 24 25">
    <location>
        <position position="118"/>
    </location>
</feature>
<feature type="modified residue" description="Phosphothreonine" evidence="18 19 20 24">
    <location>
        <position position="122"/>
    </location>
</feature>
<feature type="splice variant" id="VSP_055500" description="In isoform 2." evidence="15">
    <original>MGEVEAPGRLWLESPPGGAPPIFLPSDGQALVLGRGPLTQVTDRKCSRTQ</original>
    <variation>MQILTPPLQSS</variation>
    <location>
        <begin position="1"/>
        <end position="50"/>
    </location>
</feature>
<feature type="sequence variant" id="VAR_019260" description="In dbSNP:rs3739168." evidence="13">
    <original>P</original>
    <variation>S</variation>
    <location>
        <position position="20"/>
    </location>
</feature>
<feature type="sequence variant" id="VAR_019261" description="In dbSNP:rs3739173." evidence="13">
    <original>A</original>
    <variation>V</variation>
    <location>
        <position position="63"/>
    </location>
</feature>
<feature type="sequence variant" id="VAR_063835" description="In MCSZ; dbSNP:rs267606957." evidence="8">
    <original>L</original>
    <variation>F</variation>
    <location>
        <position position="176"/>
    </location>
</feature>
<feature type="sequence variant" id="VAR_019262" description="In dbSNP:rs3739185." evidence="13">
    <original>R</original>
    <variation>S</variation>
    <location>
        <position position="180"/>
    </location>
</feature>
<feature type="sequence variant" id="VAR_019263" description="In dbSNP:rs3739186." evidence="13">
    <original>Y</original>
    <variation>N</variation>
    <location>
        <position position="196"/>
    </location>
</feature>
<feature type="sequence variant" id="VAR_063836" description="In MCSZ; impaired recruitment to DNA damage sites; dbSNP:rs267606956." evidence="8 12">
    <original>E</original>
    <variation>K</variation>
    <location>
        <position position="326"/>
    </location>
</feature>
<feature type="sequence variant" id="VAR_073369" description="In AOA4; dbSNP:rs786203983." evidence="10">
    <original>G</original>
    <variation>W</variation>
    <location>
        <position position="375"/>
    </location>
</feature>
<feature type="sequence variant" id="VAR_073370" description="In AOA4." evidence="10">
    <location>
        <position position="408"/>
    </location>
</feature>
<feature type="sequence variant" id="VAR_076537" description="In MCSZ; atypical phenotype; dbSNP:rs376854895." evidence="11">
    <original>R</original>
    <variation>P</variation>
    <location>
        <position position="462"/>
    </location>
</feature>
<feature type="sequence variant" id="VAR_019264" description="In dbSNP:rs3739206." evidence="13">
    <original>V</original>
    <variation>G</variation>
    <location>
        <position position="478"/>
    </location>
</feature>
<feature type="sequence conflict" description="In Ref. 2; AAD50639." evidence="16" ref="2">
    <original>A</original>
    <variation>P</variation>
    <location>
        <position position="6"/>
    </location>
</feature>
<feature type="sequence conflict" description="In Ref. 1; AAD51135." evidence="16" ref="1">
    <original>G</original>
    <variation>E</variation>
    <location>
        <position position="18"/>
    </location>
</feature>
<feature type="sequence conflict" description="In Ref. 3; AAD47379." evidence="16" ref="3">
    <original>R</original>
    <variation>C</variation>
    <location>
        <position position="458"/>
    </location>
</feature>
<feature type="strand" evidence="26">
    <location>
        <begin position="9"/>
        <end position="13"/>
    </location>
</feature>
<feature type="strand" evidence="26">
    <location>
        <begin position="31"/>
        <end position="33"/>
    </location>
</feature>
<feature type="turn" evidence="26">
    <location>
        <begin position="37"/>
        <end position="40"/>
    </location>
</feature>
<feature type="strand" evidence="26">
    <location>
        <begin position="51"/>
        <end position="56"/>
    </location>
</feature>
<feature type="turn" evidence="26">
    <location>
        <begin position="57"/>
        <end position="60"/>
    </location>
</feature>
<feature type="strand" evidence="26">
    <location>
        <begin position="61"/>
        <end position="66"/>
    </location>
</feature>
<feature type="strand" evidence="26">
    <location>
        <begin position="68"/>
        <end position="70"/>
    </location>
</feature>
<feature type="strand" evidence="26">
    <location>
        <begin position="84"/>
        <end position="88"/>
    </location>
</feature>
<feature type="strand" evidence="26">
    <location>
        <begin position="92"/>
        <end position="96"/>
    </location>
</feature>
<feature type="strand" evidence="26">
    <location>
        <begin position="99"/>
        <end position="107"/>
    </location>
</feature>
<reference key="1">
    <citation type="journal article" date="1999" name="J. Biol. Chem.">
        <title>Molecular cloning of the human gene, PNKP, encoding a polynucleotide kinase 3'-phosphatase and evidence for its role in repair of DNA strand breaks caused by oxidative damage.</title>
        <authorList>
            <person name="Jilani A."/>
            <person name="Ramotar D."/>
            <person name="Slack C."/>
            <person name="Ong C."/>
            <person name="Yang X.M."/>
            <person name="Scherer S.W."/>
            <person name="Lasko D.D."/>
        </authorList>
    </citation>
    <scope>NUCLEOTIDE SEQUENCE [MRNA] (ISOFORM 1)</scope>
    <scope>FUNCTION</scope>
    <scope>CATALYTIC ACTIVITY</scope>
    <scope>TISSUE SPECIFICITY</scope>
</reference>
<reference key="2">
    <citation type="journal article" date="1999" name="J. Biol. Chem.">
        <title>Molecular characterization of a human DNA kinase.</title>
        <authorList>
            <person name="Karimi-Busheri F."/>
            <person name="Daly G."/>
            <person name="Robins P."/>
            <person name="Canas B."/>
            <person name="Pappin D.J.C."/>
            <person name="Sgouros J."/>
            <person name="Miller G.G."/>
            <person name="Fakhrai H."/>
            <person name="Davis E.M."/>
            <person name="Le Beau M.M."/>
            <person name="Weinfeld M."/>
        </authorList>
    </citation>
    <scope>NUCLEOTIDE SEQUENCE [MRNA] (ISOFORM 1)</scope>
    <scope>PARTIAL PROTEIN SEQUENCE</scope>
    <scope>FUNCTION</scope>
    <scope>CATALYTIC ACTIVITY</scope>
    <scope>SUBCELLULAR LOCATION</scope>
    <scope>TISSUE SPECIFICITY</scope>
    <scope>CHARACTERIZATION</scope>
</reference>
<reference key="3">
    <citation type="submission" date="1998-07" db="EMBL/GenBank/DDBJ databases">
        <title>Cloning a cDNA which is differently expressed in malignancies.</title>
        <authorList>
            <person name="Yang H.W."/>
            <person name="Piao H.Y."/>
            <person name="Chen Y.Z."/>
            <person name="Hayashi Y."/>
        </authorList>
    </citation>
    <scope>NUCLEOTIDE SEQUENCE [MRNA] (ISOFORM 1)</scope>
</reference>
<reference key="4">
    <citation type="submission" date="2001-02" db="EMBL/GenBank/DDBJ databases">
        <title>Genomic organization, physical mapping and expression analysis of the human polynucleotide kinase-3'-phosphatase (PNKP) gene.</title>
        <authorList>
            <person name="Scorilas A."/>
            <person name="Katsaros N."/>
        </authorList>
    </citation>
    <scope>NUCLEOTIDE SEQUENCE [GENOMIC DNA]</scope>
</reference>
<reference key="5">
    <citation type="submission" date="2002-07" db="EMBL/GenBank/DDBJ databases">
        <authorList>
            <consortium name="NIEHS SNPs program"/>
        </authorList>
    </citation>
    <scope>NUCLEOTIDE SEQUENCE [GENOMIC DNA]</scope>
    <scope>VARIANTS SER-20; VAL-63; SER-180; ASN-196 AND GLY-478</scope>
</reference>
<reference key="6">
    <citation type="journal article" date="2004" name="Nature">
        <title>The DNA sequence and biology of human chromosome 19.</title>
        <authorList>
            <person name="Grimwood J."/>
            <person name="Gordon L.A."/>
            <person name="Olsen A.S."/>
            <person name="Terry A."/>
            <person name="Schmutz J."/>
            <person name="Lamerdin J.E."/>
            <person name="Hellsten U."/>
            <person name="Goodstein D."/>
            <person name="Couronne O."/>
            <person name="Tran-Gyamfi M."/>
            <person name="Aerts A."/>
            <person name="Altherr M."/>
            <person name="Ashworth L."/>
            <person name="Bajorek E."/>
            <person name="Black S."/>
            <person name="Branscomb E."/>
            <person name="Caenepeel S."/>
            <person name="Carrano A.V."/>
            <person name="Caoile C."/>
            <person name="Chan Y.M."/>
            <person name="Christensen M."/>
            <person name="Cleland C.A."/>
            <person name="Copeland A."/>
            <person name="Dalin E."/>
            <person name="Dehal P."/>
            <person name="Denys M."/>
            <person name="Detter J.C."/>
            <person name="Escobar J."/>
            <person name="Flowers D."/>
            <person name="Fotopulos D."/>
            <person name="Garcia C."/>
            <person name="Georgescu A.M."/>
            <person name="Glavina T."/>
            <person name="Gomez M."/>
            <person name="Gonzales E."/>
            <person name="Groza M."/>
            <person name="Hammon N."/>
            <person name="Hawkins T."/>
            <person name="Haydu L."/>
            <person name="Ho I."/>
            <person name="Huang W."/>
            <person name="Israni S."/>
            <person name="Jett J."/>
            <person name="Kadner K."/>
            <person name="Kimball H."/>
            <person name="Kobayashi A."/>
            <person name="Larionov V."/>
            <person name="Leem S.-H."/>
            <person name="Lopez F."/>
            <person name="Lou Y."/>
            <person name="Lowry S."/>
            <person name="Malfatti S."/>
            <person name="Martinez D."/>
            <person name="McCready P.M."/>
            <person name="Medina C."/>
            <person name="Morgan J."/>
            <person name="Nelson K."/>
            <person name="Nolan M."/>
            <person name="Ovcharenko I."/>
            <person name="Pitluck S."/>
            <person name="Pollard M."/>
            <person name="Popkie A.P."/>
            <person name="Predki P."/>
            <person name="Quan G."/>
            <person name="Ramirez L."/>
            <person name="Rash S."/>
            <person name="Retterer J."/>
            <person name="Rodriguez A."/>
            <person name="Rogers S."/>
            <person name="Salamov A."/>
            <person name="Salazar A."/>
            <person name="She X."/>
            <person name="Smith D."/>
            <person name="Slezak T."/>
            <person name="Solovyev V."/>
            <person name="Thayer N."/>
            <person name="Tice H."/>
            <person name="Tsai M."/>
            <person name="Ustaszewska A."/>
            <person name="Vo N."/>
            <person name="Wagner M."/>
            <person name="Wheeler J."/>
            <person name="Wu K."/>
            <person name="Xie G."/>
            <person name="Yang J."/>
            <person name="Dubchak I."/>
            <person name="Furey T.S."/>
            <person name="DeJong P."/>
            <person name="Dickson M."/>
            <person name="Gordon D."/>
            <person name="Eichler E.E."/>
            <person name="Pennacchio L.A."/>
            <person name="Richardson P."/>
            <person name="Stubbs L."/>
            <person name="Rokhsar D.S."/>
            <person name="Myers R.M."/>
            <person name="Rubin E.M."/>
            <person name="Lucas S.M."/>
        </authorList>
    </citation>
    <scope>NUCLEOTIDE SEQUENCE [LARGE SCALE GENOMIC DNA]</scope>
</reference>
<reference key="7">
    <citation type="journal article" date="2004" name="Genome Res.">
        <title>The status, quality, and expansion of the NIH full-length cDNA project: the Mammalian Gene Collection (MGC).</title>
        <authorList>
            <consortium name="The MGC Project Team"/>
        </authorList>
    </citation>
    <scope>NUCLEOTIDE SEQUENCE [LARGE SCALE MRNA] (ISOFORMS 1 AND 2)</scope>
    <source>
        <tissue>Blood</tissue>
        <tissue>Ovary</tissue>
    </source>
</reference>
<reference key="8">
    <citation type="journal article" date="2004" name="EMBO J.">
        <title>Xrcc4 physically links DNA end processing by polynucleotide kinase to DNA ligation by DNA ligase IV.</title>
        <authorList>
            <person name="Koch C.A."/>
            <person name="Agyei R."/>
            <person name="Galicia S."/>
            <person name="Metalnikov P."/>
            <person name="O'Donnell P."/>
            <person name="Starostine A."/>
            <person name="Weinfeld M."/>
            <person name="Durocher D."/>
        </authorList>
    </citation>
    <scope>FUNCTION</scope>
    <scope>DOMAIN</scope>
    <scope>INTERACTION WITH XRCC4</scope>
</reference>
<reference key="9">
    <citation type="journal article" date="2006" name="Cell">
        <title>Global, in vivo, and site-specific phosphorylation dynamics in signaling networks.</title>
        <authorList>
            <person name="Olsen J.V."/>
            <person name="Blagoev B."/>
            <person name="Gnad F."/>
            <person name="Macek B."/>
            <person name="Kumar C."/>
            <person name="Mortensen P."/>
            <person name="Mann M."/>
        </authorList>
    </citation>
    <scope>PHOSPHORYLATION [LARGE SCALE ANALYSIS] AT THR-122</scope>
    <scope>IDENTIFICATION BY MASS SPECTROMETRY [LARGE SCALE ANALYSIS]</scope>
    <source>
        <tissue>Cervix carcinoma</tissue>
    </source>
</reference>
<reference key="10">
    <citation type="journal article" date="2008" name="Proc. Natl. Acad. Sci. U.S.A.">
        <title>A quantitative atlas of mitotic phosphorylation.</title>
        <authorList>
            <person name="Dephoure N."/>
            <person name="Zhou C."/>
            <person name="Villen J."/>
            <person name="Beausoleil S.A."/>
            <person name="Bakalarski C.E."/>
            <person name="Elledge S.J."/>
            <person name="Gygi S.P."/>
        </authorList>
    </citation>
    <scope>PHOSPHORYLATION [LARGE SCALE ANALYSIS] AT THR-118 AND THR-122</scope>
    <scope>IDENTIFICATION BY MASS SPECTROMETRY [LARGE SCALE ANALYSIS]</scope>
    <source>
        <tissue>Cervix carcinoma</tissue>
    </source>
</reference>
<reference key="11">
    <citation type="journal article" date="2009" name="Anal. Chem.">
        <title>Lys-N and trypsin cover complementary parts of the phosphoproteome in a refined SCX-based approach.</title>
        <authorList>
            <person name="Gauci S."/>
            <person name="Helbig A.O."/>
            <person name="Slijper M."/>
            <person name="Krijgsveld J."/>
            <person name="Heck A.J."/>
            <person name="Mohammed S."/>
        </authorList>
    </citation>
    <scope>IDENTIFICATION BY MASS SPECTROMETRY [LARGE SCALE ANALYSIS]</scope>
</reference>
<reference key="12">
    <citation type="journal article" date="2009" name="Sci. Signal.">
        <title>Quantitative phosphoproteomic analysis of T cell receptor signaling reveals system-wide modulation of protein-protein interactions.</title>
        <authorList>
            <person name="Mayya V."/>
            <person name="Lundgren D.H."/>
            <person name="Hwang S.-I."/>
            <person name="Rezaul K."/>
            <person name="Wu L."/>
            <person name="Eng J.K."/>
            <person name="Rodionov V."/>
            <person name="Han D.K."/>
        </authorList>
    </citation>
    <scope>PHOSPHORYLATION [LARGE SCALE ANALYSIS] AT THR-118 AND THR-122</scope>
    <scope>IDENTIFICATION BY MASS SPECTROMETRY [LARGE SCALE ANALYSIS]</scope>
    <source>
        <tissue>Leukemic T-cell</tissue>
    </source>
</reference>
<reference key="13">
    <citation type="journal article" date="2010" name="Sci. Signal.">
        <title>Quantitative phosphoproteomics reveals widespread full phosphorylation site occupancy during mitosis.</title>
        <authorList>
            <person name="Olsen J.V."/>
            <person name="Vermeulen M."/>
            <person name="Santamaria A."/>
            <person name="Kumar C."/>
            <person name="Miller M.L."/>
            <person name="Jensen L.J."/>
            <person name="Gnad F."/>
            <person name="Cox J."/>
            <person name="Jensen T.S."/>
            <person name="Nigg E.A."/>
            <person name="Brunak S."/>
            <person name="Mann M."/>
        </authorList>
    </citation>
    <scope>PHOSPHORYLATION [LARGE SCALE ANALYSIS] AT THR-118</scope>
    <scope>IDENTIFICATION BY MASS SPECTROMETRY [LARGE SCALE ANALYSIS]</scope>
    <source>
        <tissue>Cervix carcinoma</tissue>
    </source>
</reference>
<reference key="14">
    <citation type="journal article" date="2010" name="J. Biol. Chem.">
        <title>Dual modes of interaction between XRCC4 and polynucleotide kinase/phosphatase: implications for nonhomologous end joining.</title>
        <authorList>
            <person name="Mani R.S."/>
            <person name="Yu Y."/>
            <person name="Fang S."/>
            <person name="Lu M."/>
            <person name="Fanta M."/>
            <person name="Zolner A.E."/>
            <person name="Tahbaz N."/>
            <person name="Ramsden D.A."/>
            <person name="Litchfield D.W."/>
            <person name="Lees-Miller S.P."/>
            <person name="Weinfeld M."/>
        </authorList>
    </citation>
    <scope>FUNCTION</scope>
    <scope>DOMAIN</scope>
    <scope>INTERACTION WITH XRCC4</scope>
</reference>
<reference key="15">
    <citation type="journal article" date="2011" name="BMC Syst. Biol.">
        <title>Initial characterization of the human central proteome.</title>
        <authorList>
            <person name="Burkard T.R."/>
            <person name="Planyavsky M."/>
            <person name="Kaupe I."/>
            <person name="Breitwieser F.P."/>
            <person name="Buerckstuemmer T."/>
            <person name="Bennett K.L."/>
            <person name="Superti-Furga G."/>
            <person name="Colinge J."/>
        </authorList>
    </citation>
    <scope>IDENTIFICATION BY MASS SPECTROMETRY [LARGE SCALE ANALYSIS]</scope>
</reference>
<reference key="16">
    <citation type="journal article" date="2011" name="Sci. Signal.">
        <title>System-wide temporal characterization of the proteome and phosphoproteome of human embryonic stem cell differentiation.</title>
        <authorList>
            <person name="Rigbolt K.T."/>
            <person name="Prokhorova T.A."/>
            <person name="Akimov V."/>
            <person name="Henningsen J."/>
            <person name="Johansen P.T."/>
            <person name="Kratchmarova I."/>
            <person name="Kassem M."/>
            <person name="Mann M."/>
            <person name="Olsen J.V."/>
            <person name="Blagoev B."/>
        </authorList>
    </citation>
    <scope>PHOSPHORYLATION [LARGE SCALE ANALYSIS] AT SER-114 AND THR-118</scope>
    <scope>IDENTIFICATION BY MASS SPECTROMETRY [LARGE SCALE ANALYSIS]</scope>
</reference>
<reference key="17">
    <citation type="journal article" date="2012" name="Proc. Natl. Acad. Sci. U.S.A.">
        <title>N-terminal acetylome analyses and functional insights of the N-terminal acetyltransferase NatB.</title>
        <authorList>
            <person name="Van Damme P."/>
            <person name="Lasa M."/>
            <person name="Polevoda B."/>
            <person name="Gazquez C."/>
            <person name="Elosegui-Artola A."/>
            <person name="Kim D.S."/>
            <person name="De Juan-Pardo E."/>
            <person name="Demeyer K."/>
            <person name="Hole K."/>
            <person name="Larrea E."/>
            <person name="Timmerman E."/>
            <person name="Prieto J."/>
            <person name="Arnesen T."/>
            <person name="Sherman F."/>
            <person name="Gevaert K."/>
            <person name="Aldabe R."/>
        </authorList>
    </citation>
    <scope>ACETYLATION [LARGE SCALE ANALYSIS] AT MET-1</scope>
    <scope>IDENTIFICATION BY MASS SPECTROMETRY [LARGE SCALE ANALYSIS]</scope>
</reference>
<reference key="18">
    <citation type="journal article" date="2013" name="J. Proteome Res.">
        <title>Toward a comprehensive characterization of a human cancer cell phosphoproteome.</title>
        <authorList>
            <person name="Zhou H."/>
            <person name="Di Palma S."/>
            <person name="Preisinger C."/>
            <person name="Peng M."/>
            <person name="Polat A.N."/>
            <person name="Heck A.J."/>
            <person name="Mohammed S."/>
        </authorList>
    </citation>
    <scope>PHOSPHORYLATION [LARGE SCALE ANALYSIS] AT SER-114; THR-118 AND THR-122</scope>
    <scope>IDENTIFICATION BY MASS SPECTROMETRY [LARGE SCALE ANALYSIS]</scope>
    <source>
        <tissue>Cervix carcinoma</tissue>
        <tissue>Erythroleukemia</tissue>
    </source>
</reference>
<reference key="19">
    <citation type="journal article" date="2014" name="J. Proteomics">
        <title>An enzyme assisted RP-RPLC approach for in-depth analysis of human liver phosphoproteome.</title>
        <authorList>
            <person name="Bian Y."/>
            <person name="Song C."/>
            <person name="Cheng K."/>
            <person name="Dong M."/>
            <person name="Wang F."/>
            <person name="Huang J."/>
            <person name="Sun D."/>
            <person name="Wang L."/>
            <person name="Ye M."/>
            <person name="Zou H."/>
        </authorList>
    </citation>
    <scope>PHOSPHORYLATION [LARGE SCALE ANALYSIS] AT THR-118</scope>
    <scope>IDENTIFICATION BY MASS SPECTROMETRY [LARGE SCALE ANALYSIS]</scope>
    <source>
        <tissue>Liver</tissue>
    </source>
</reference>
<reference key="20">
    <citation type="journal article" date="2017" name="Nucleic Acids Res.">
        <title>Structural and functional characterization of the PNKP-XRCC4-LigIV DNA repair complex.</title>
        <authorList>
            <person name="Aceytuno R.D."/>
            <person name="Piett C.G."/>
            <person name="Havali-Shahriari Z."/>
            <person name="Edwards R.A."/>
            <person name="Rey M."/>
            <person name="Ye R."/>
            <person name="Javed F."/>
            <person name="Fang S."/>
            <person name="Mani R."/>
            <person name="Weinfeld M."/>
            <person name="Hammel M."/>
            <person name="Tainer J.A."/>
            <person name="Schriemer D.C."/>
            <person name="Lees-Miller S.P."/>
            <person name="Glover J.N.M."/>
        </authorList>
    </citation>
    <scope>FUNCTION</scope>
    <scope>SUBCELLULAR LOCATION</scope>
    <scope>INTERACTION WITH XRCC4</scope>
    <scope>CHARACTERIZATION OF VARIANT MCSZ LYS-326</scope>
</reference>
<reference key="21">
    <citation type="journal article" date="2015" name="Am. J. Hum. Genet.">
        <title>Mutations in PNKP cause recessive ataxia with oculomotor apraxia type 4.</title>
        <authorList>
            <person name="Bras J."/>
            <person name="Alonso I."/>
            <person name="Barbot C."/>
            <person name="Costa M.M."/>
            <person name="Darwent L."/>
            <person name="Orme T."/>
            <person name="Sequeiros J."/>
            <person name="Hardy J."/>
            <person name="Coutinho P."/>
            <person name="Guerreiro R."/>
        </authorList>
    </citation>
    <scope>INVOLVEMENT IN AOA4</scope>
    <scope>VARIANTS AOA4 TRP-375 AND THR-408 DEL</scope>
</reference>
<reference key="22">
    <citation type="journal article" date="2009" name="Nucleic Acids Res.">
        <title>Specific recognition of a multiply phosphorylated motif in the DNA repair scaffold XRCC1 by the FHA domain of human PNK.</title>
        <authorList>
            <person name="Ali A.A."/>
            <person name="Jukes R.M."/>
            <person name="Pearl L.H."/>
            <person name="Oliver A.W."/>
        </authorList>
    </citation>
    <scope>X-RAY CRYSTALLOGRAPHY (1.4 ANGSTROMS) OF 1-110 ALONE AND IN COMPLEX WITH XRCC1 PHOSPHOPEPTIDE</scope>
    <scope>DOMAIN FHA</scope>
</reference>
<reference key="23">
    <citation type="journal article" date="2010" name="Nat. Genet.">
        <title>Mutations in PNKP cause microcephaly, seizures and defects in DNA repair.</title>
        <authorList>
            <person name="Shen J."/>
            <person name="Gilmore E.C."/>
            <person name="Marshall C.A."/>
            <person name="Haddadin M."/>
            <person name="Reynolds J.J."/>
            <person name="Eyaid W."/>
            <person name="Bodell A."/>
            <person name="Barry B."/>
            <person name="Gleason D."/>
            <person name="Allen K."/>
            <person name="Ganesh V.S."/>
            <person name="Chang B.S."/>
            <person name="Grix A."/>
            <person name="Hill R.S."/>
            <person name="Topcu M."/>
            <person name="Caldecott K.W."/>
            <person name="Barkovich A.J."/>
            <person name="Walsh C.A."/>
        </authorList>
    </citation>
    <scope>VARIANTS MCSZ PHE-176 AND LYS-326</scope>
</reference>
<reference key="24">
    <citation type="journal article" date="2016" name="Am. J. Med. Genet. A">
        <title>Microcephalic primordial dwarfism in an Emirati patient with PNKP mutation.</title>
        <authorList>
            <person name="Nair P."/>
            <person name="Hamzeh A.R."/>
            <person name="Mohamed M."/>
            <person name="Saif F."/>
            <person name="Tawfiq N."/>
            <person name="El Halik M."/>
            <person name="Al-Ali M.T."/>
            <person name="Bastaki F."/>
        </authorList>
    </citation>
    <scope>VARIANT MCSZ PRO-462</scope>
</reference>
<evidence type="ECO:0000250" key="1">
    <source>
        <dbReference type="UniProtKB" id="Q9JLV6"/>
    </source>
</evidence>
<evidence type="ECO:0000255" key="2"/>
<evidence type="ECO:0000256" key="3">
    <source>
        <dbReference type="SAM" id="MobiDB-lite"/>
    </source>
</evidence>
<evidence type="ECO:0000269" key="4">
    <source>
    </source>
</evidence>
<evidence type="ECO:0000269" key="5">
    <source>
    </source>
</evidence>
<evidence type="ECO:0000269" key="6">
    <source>
    </source>
</evidence>
<evidence type="ECO:0000269" key="7">
    <source>
    </source>
</evidence>
<evidence type="ECO:0000269" key="8">
    <source>
    </source>
</evidence>
<evidence type="ECO:0000269" key="9">
    <source>
    </source>
</evidence>
<evidence type="ECO:0000269" key="10">
    <source>
    </source>
</evidence>
<evidence type="ECO:0000269" key="11">
    <source>
    </source>
</evidence>
<evidence type="ECO:0000269" key="12">
    <source>
    </source>
</evidence>
<evidence type="ECO:0000269" key="13">
    <source ref="5"/>
</evidence>
<evidence type="ECO:0000303" key="14">
    <source>
    </source>
</evidence>
<evidence type="ECO:0000303" key="15">
    <source>
    </source>
</evidence>
<evidence type="ECO:0000305" key="16"/>
<evidence type="ECO:0000312" key="17">
    <source>
        <dbReference type="HGNC" id="HGNC:9154"/>
    </source>
</evidence>
<evidence type="ECO:0007744" key="18">
    <source>
    </source>
</evidence>
<evidence type="ECO:0007744" key="19">
    <source>
    </source>
</evidence>
<evidence type="ECO:0007744" key="20">
    <source>
    </source>
</evidence>
<evidence type="ECO:0007744" key="21">
    <source>
    </source>
</evidence>
<evidence type="ECO:0007744" key="22">
    <source>
    </source>
</evidence>
<evidence type="ECO:0007744" key="23">
    <source>
    </source>
</evidence>
<evidence type="ECO:0007744" key="24">
    <source>
    </source>
</evidence>
<evidence type="ECO:0007744" key="25">
    <source>
    </source>
</evidence>
<evidence type="ECO:0007829" key="26">
    <source>
        <dbReference type="PDB" id="2BRF"/>
    </source>
</evidence>
<keyword id="KW-0002">3D-structure</keyword>
<keyword id="KW-0007">Acetylation</keyword>
<keyword id="KW-0025">Alternative splicing</keyword>
<keyword id="KW-0067">ATP-binding</keyword>
<keyword id="KW-0158">Chromosome</keyword>
<keyword id="KW-0903">Direct protein sequencing</keyword>
<keyword id="KW-0225">Disease variant</keyword>
<keyword id="KW-0227">DNA damage</keyword>
<keyword id="KW-0234">DNA repair</keyword>
<keyword id="KW-0887">Epilepsy</keyword>
<keyword id="KW-0378">Hydrolase</keyword>
<keyword id="KW-0991">Intellectual disability</keyword>
<keyword id="KW-0418">Kinase</keyword>
<keyword id="KW-0511">Multifunctional enzyme</keyword>
<keyword id="KW-0523">Neurodegeneration</keyword>
<keyword id="KW-0547">Nucleotide-binding</keyword>
<keyword id="KW-0539">Nucleus</keyword>
<keyword id="KW-0597">Phosphoprotein</keyword>
<keyword id="KW-0905">Primary microcephaly</keyword>
<keyword id="KW-1267">Proteomics identification</keyword>
<keyword id="KW-1185">Reference proteome</keyword>
<keyword id="KW-0808">Transferase</keyword>
<organism>
    <name type="scientific">Homo sapiens</name>
    <name type="common">Human</name>
    <dbReference type="NCBI Taxonomy" id="9606"/>
    <lineage>
        <taxon>Eukaryota</taxon>
        <taxon>Metazoa</taxon>
        <taxon>Chordata</taxon>
        <taxon>Craniata</taxon>
        <taxon>Vertebrata</taxon>
        <taxon>Euteleostomi</taxon>
        <taxon>Mammalia</taxon>
        <taxon>Eutheria</taxon>
        <taxon>Euarchontoglires</taxon>
        <taxon>Primates</taxon>
        <taxon>Haplorrhini</taxon>
        <taxon>Catarrhini</taxon>
        <taxon>Hominidae</taxon>
        <taxon>Homo</taxon>
    </lineage>
</organism>
<accession>Q96T60</accession>
<accession>Q9BUL2</accession>
<accession>Q9P1V2</accession>
<accession>Q9UKU8</accession>
<accession>Q9UNF8</accession>
<accession>Q9UNI0</accession>
<proteinExistence type="evidence at protein level"/>
<protein>
    <recommendedName>
        <fullName>Bifunctional polynucleotide phosphatase/kinase</fullName>
    </recommendedName>
    <alternativeName>
        <fullName>DNA 5'-kinase/3'-phosphatase</fullName>
    </alternativeName>
    <alternativeName>
        <fullName>Polynucleotide kinase-3'-phosphatase</fullName>
    </alternativeName>
    <domain>
        <recommendedName>
            <fullName>Polynucleotide 3'-phosphatase</fullName>
            <ecNumber evidence="4 5">3.1.3.32</ecNumber>
        </recommendedName>
        <alternativeName>
            <fullName>2'(3')-polynucleotidase</fullName>
        </alternativeName>
    </domain>
    <domain>
        <recommendedName>
            <fullName>Polynucleotide 5'-hydroxyl-kinase</fullName>
            <ecNumber>2.7.1.78</ecNumber>
        </recommendedName>
    </domain>
</protein>